<reference key="1">
    <citation type="submission" date="2001-07" db="EMBL/GenBank/DDBJ databases">
        <title>Genome-wide discovery and analysis of human seven transmembrane helix receptor genes.</title>
        <authorList>
            <person name="Suwa M."/>
            <person name="Sato T."/>
            <person name="Okouchi I."/>
            <person name="Arita M."/>
            <person name="Futami K."/>
            <person name="Matsumoto S."/>
            <person name="Tsutsumi S."/>
            <person name="Aburatani H."/>
            <person name="Asai K."/>
            <person name="Akiyama Y."/>
        </authorList>
    </citation>
    <scope>NUCLEOTIDE SEQUENCE [GENOMIC DNA]</scope>
</reference>
<reference key="2">
    <citation type="journal article" date="2006" name="Nature">
        <title>The DNA sequence and biological annotation of human chromosome 1.</title>
        <authorList>
            <person name="Gregory S.G."/>
            <person name="Barlow K.F."/>
            <person name="McLay K.E."/>
            <person name="Kaul R."/>
            <person name="Swarbreck D."/>
            <person name="Dunham A."/>
            <person name="Scott C.E."/>
            <person name="Howe K.L."/>
            <person name="Woodfine K."/>
            <person name="Spencer C.C.A."/>
            <person name="Jones M.C."/>
            <person name="Gillson C."/>
            <person name="Searle S."/>
            <person name="Zhou Y."/>
            <person name="Kokocinski F."/>
            <person name="McDonald L."/>
            <person name="Evans R."/>
            <person name="Phillips K."/>
            <person name="Atkinson A."/>
            <person name="Cooper R."/>
            <person name="Jones C."/>
            <person name="Hall R.E."/>
            <person name="Andrews T.D."/>
            <person name="Lloyd C."/>
            <person name="Ainscough R."/>
            <person name="Almeida J.P."/>
            <person name="Ambrose K.D."/>
            <person name="Anderson F."/>
            <person name="Andrew R.W."/>
            <person name="Ashwell R.I.S."/>
            <person name="Aubin K."/>
            <person name="Babbage A.K."/>
            <person name="Bagguley C.L."/>
            <person name="Bailey J."/>
            <person name="Beasley H."/>
            <person name="Bethel G."/>
            <person name="Bird C.P."/>
            <person name="Bray-Allen S."/>
            <person name="Brown J.Y."/>
            <person name="Brown A.J."/>
            <person name="Buckley D."/>
            <person name="Burton J."/>
            <person name="Bye J."/>
            <person name="Carder C."/>
            <person name="Chapman J.C."/>
            <person name="Clark S.Y."/>
            <person name="Clarke G."/>
            <person name="Clee C."/>
            <person name="Cobley V."/>
            <person name="Collier R.E."/>
            <person name="Corby N."/>
            <person name="Coville G.J."/>
            <person name="Davies J."/>
            <person name="Deadman R."/>
            <person name="Dunn M."/>
            <person name="Earthrowl M."/>
            <person name="Ellington A.G."/>
            <person name="Errington H."/>
            <person name="Frankish A."/>
            <person name="Frankland J."/>
            <person name="French L."/>
            <person name="Garner P."/>
            <person name="Garnett J."/>
            <person name="Gay L."/>
            <person name="Ghori M.R.J."/>
            <person name="Gibson R."/>
            <person name="Gilby L.M."/>
            <person name="Gillett W."/>
            <person name="Glithero R.J."/>
            <person name="Grafham D.V."/>
            <person name="Griffiths C."/>
            <person name="Griffiths-Jones S."/>
            <person name="Grocock R."/>
            <person name="Hammond S."/>
            <person name="Harrison E.S.I."/>
            <person name="Hart E."/>
            <person name="Haugen E."/>
            <person name="Heath P.D."/>
            <person name="Holmes S."/>
            <person name="Holt K."/>
            <person name="Howden P.J."/>
            <person name="Hunt A.R."/>
            <person name="Hunt S.E."/>
            <person name="Hunter G."/>
            <person name="Isherwood J."/>
            <person name="James R."/>
            <person name="Johnson C."/>
            <person name="Johnson D."/>
            <person name="Joy A."/>
            <person name="Kay M."/>
            <person name="Kershaw J.K."/>
            <person name="Kibukawa M."/>
            <person name="Kimberley A.M."/>
            <person name="King A."/>
            <person name="Knights A.J."/>
            <person name="Lad H."/>
            <person name="Laird G."/>
            <person name="Lawlor S."/>
            <person name="Leongamornlert D.A."/>
            <person name="Lloyd D.M."/>
            <person name="Loveland J."/>
            <person name="Lovell J."/>
            <person name="Lush M.J."/>
            <person name="Lyne R."/>
            <person name="Martin S."/>
            <person name="Mashreghi-Mohammadi M."/>
            <person name="Matthews L."/>
            <person name="Matthews N.S.W."/>
            <person name="McLaren S."/>
            <person name="Milne S."/>
            <person name="Mistry S."/>
            <person name="Moore M.J.F."/>
            <person name="Nickerson T."/>
            <person name="O'Dell C.N."/>
            <person name="Oliver K."/>
            <person name="Palmeiri A."/>
            <person name="Palmer S.A."/>
            <person name="Parker A."/>
            <person name="Patel D."/>
            <person name="Pearce A.V."/>
            <person name="Peck A.I."/>
            <person name="Pelan S."/>
            <person name="Phelps K."/>
            <person name="Phillimore B.J."/>
            <person name="Plumb R."/>
            <person name="Rajan J."/>
            <person name="Raymond C."/>
            <person name="Rouse G."/>
            <person name="Saenphimmachak C."/>
            <person name="Sehra H.K."/>
            <person name="Sheridan E."/>
            <person name="Shownkeen R."/>
            <person name="Sims S."/>
            <person name="Skuce C.D."/>
            <person name="Smith M."/>
            <person name="Steward C."/>
            <person name="Subramanian S."/>
            <person name="Sycamore N."/>
            <person name="Tracey A."/>
            <person name="Tromans A."/>
            <person name="Van Helmond Z."/>
            <person name="Wall M."/>
            <person name="Wallis J.M."/>
            <person name="White S."/>
            <person name="Whitehead S.L."/>
            <person name="Wilkinson J.E."/>
            <person name="Willey D.L."/>
            <person name="Williams H."/>
            <person name="Wilming L."/>
            <person name="Wray P.W."/>
            <person name="Wu Z."/>
            <person name="Coulson A."/>
            <person name="Vaudin M."/>
            <person name="Sulston J.E."/>
            <person name="Durbin R.M."/>
            <person name="Hubbard T."/>
            <person name="Wooster R."/>
            <person name="Dunham I."/>
            <person name="Carter N.P."/>
            <person name="McVean G."/>
            <person name="Ross M.T."/>
            <person name="Harrow J."/>
            <person name="Olson M.V."/>
            <person name="Beck S."/>
            <person name="Rogers J."/>
            <person name="Bentley D.R."/>
        </authorList>
    </citation>
    <scope>NUCLEOTIDE SEQUENCE [LARGE SCALE GENOMIC DNA]</scope>
</reference>
<reference key="3">
    <citation type="journal article" date="2004" name="Proc. Natl. Acad. Sci. U.S.A.">
        <title>The human olfactory receptor gene family.</title>
        <authorList>
            <person name="Malnic B."/>
            <person name="Godfrey P.A."/>
            <person name="Buck L.B."/>
        </authorList>
    </citation>
    <scope>IDENTIFICATION</scope>
</reference>
<reference key="4">
    <citation type="journal article" date="2004" name="Proc. Natl. Acad. Sci. U.S.A.">
        <authorList>
            <person name="Malnic B."/>
            <person name="Godfrey P.A."/>
            <person name="Buck L.B."/>
        </authorList>
    </citation>
    <scope>ERRATUM OF PUBMED:14983052</scope>
</reference>
<feature type="chain" id="PRO_0000150641" description="Olfactory receptor 6Y1">
    <location>
        <begin position="1"/>
        <end position="325"/>
    </location>
</feature>
<feature type="topological domain" description="Extracellular" evidence="1">
    <location>
        <begin position="1"/>
        <end position="30"/>
    </location>
</feature>
<feature type="transmembrane region" description="Helical; Name=1" evidence="1">
    <location>
        <begin position="31"/>
        <end position="51"/>
    </location>
</feature>
<feature type="topological domain" description="Cytoplasmic" evidence="1">
    <location>
        <begin position="52"/>
        <end position="59"/>
    </location>
</feature>
<feature type="transmembrane region" description="Helical; Name=2" evidence="1">
    <location>
        <begin position="60"/>
        <end position="80"/>
    </location>
</feature>
<feature type="topological domain" description="Extracellular" evidence="1">
    <location>
        <begin position="81"/>
        <end position="104"/>
    </location>
</feature>
<feature type="transmembrane region" description="Helical; Name=3" evidence="1">
    <location>
        <begin position="105"/>
        <end position="125"/>
    </location>
</feature>
<feature type="topological domain" description="Cytoplasmic" evidence="1">
    <location>
        <begin position="126"/>
        <end position="144"/>
    </location>
</feature>
<feature type="transmembrane region" description="Helical; Name=4" evidence="1">
    <location>
        <begin position="145"/>
        <end position="165"/>
    </location>
</feature>
<feature type="topological domain" description="Extracellular" evidence="1">
    <location>
        <begin position="166"/>
        <end position="202"/>
    </location>
</feature>
<feature type="transmembrane region" description="Helical; Name=5" evidence="1">
    <location>
        <begin position="203"/>
        <end position="222"/>
    </location>
</feature>
<feature type="topological domain" description="Cytoplasmic" evidence="1">
    <location>
        <begin position="223"/>
        <end position="242"/>
    </location>
</feature>
<feature type="transmembrane region" description="Helical; Name=6" evidence="1">
    <location>
        <begin position="243"/>
        <end position="263"/>
    </location>
</feature>
<feature type="topological domain" description="Extracellular" evidence="1">
    <location>
        <begin position="264"/>
        <end position="276"/>
    </location>
</feature>
<feature type="transmembrane region" description="Helical; Name=7" evidence="1">
    <location>
        <begin position="277"/>
        <end position="297"/>
    </location>
</feature>
<feature type="topological domain" description="Cytoplasmic" evidence="1">
    <location>
        <begin position="298"/>
        <end position="325"/>
    </location>
</feature>
<feature type="glycosylation site" description="N-linked (GlcNAc...) asparagine" evidence="1">
    <location>
        <position position="10"/>
    </location>
</feature>
<feature type="glycosylation site" description="N-linked (GlcNAc...) asparagine" evidence="1">
    <location>
        <position position="191"/>
    </location>
</feature>
<feature type="disulfide bond" evidence="2">
    <location>
        <begin position="102"/>
        <end position="194"/>
    </location>
</feature>
<feature type="sequence variant" id="VAR_062055" description="In dbSNP:rs55665765.">
    <original>T</original>
    <variation>I</variation>
    <location>
        <position position="104"/>
    </location>
</feature>
<proteinExistence type="inferred from homology"/>
<dbReference type="EMBL" id="AB065638">
    <property type="protein sequence ID" value="BAC05864.1"/>
    <property type="molecule type" value="Genomic_DNA"/>
</dbReference>
<dbReference type="EMBL" id="AL365440">
    <property type="status" value="NOT_ANNOTATED_CDS"/>
    <property type="molecule type" value="Genomic_DNA"/>
</dbReference>
<dbReference type="EMBL" id="BK004192">
    <property type="protein sequence ID" value="DAA04590.1"/>
    <property type="molecule type" value="Genomic_DNA"/>
</dbReference>
<dbReference type="CCDS" id="CCDS30899.1"/>
<dbReference type="RefSeq" id="NP_001005189.1">
    <property type="nucleotide sequence ID" value="NM_001005189.2"/>
</dbReference>
<dbReference type="RefSeq" id="NP_001372979.1">
    <property type="nucleotide sequence ID" value="NM_001386050.1"/>
</dbReference>
<dbReference type="SMR" id="Q8NGX8"/>
<dbReference type="FunCoup" id="Q8NGX8">
    <property type="interactions" value="462"/>
</dbReference>
<dbReference type="STRING" id="9606.ENSP00000492894"/>
<dbReference type="GlyCosmos" id="Q8NGX8">
    <property type="glycosylation" value="2 sites, No reported glycans"/>
</dbReference>
<dbReference type="GlyGen" id="Q8NGX8">
    <property type="glycosylation" value="2 sites"/>
</dbReference>
<dbReference type="iPTMnet" id="Q8NGX8"/>
<dbReference type="PhosphoSitePlus" id="Q8NGX8"/>
<dbReference type="BioMuta" id="OR6Y1"/>
<dbReference type="DMDM" id="38372783"/>
<dbReference type="MassIVE" id="Q8NGX8"/>
<dbReference type="PaxDb" id="9606-ENSP00000304807"/>
<dbReference type="Antibodypedia" id="64509">
    <property type="antibodies" value="7 antibodies from 7 providers"/>
</dbReference>
<dbReference type="DNASU" id="391112"/>
<dbReference type="Ensembl" id="ENST00000641282.1">
    <property type="protein sequence ID" value="ENSP00000493253.1"/>
    <property type="gene ID" value="ENSG00000197532.3"/>
</dbReference>
<dbReference type="Ensembl" id="ENST00000641622.1">
    <property type="protein sequence ID" value="ENSP00000492894.1"/>
    <property type="gene ID" value="ENSG00000197532.3"/>
</dbReference>
<dbReference type="GeneID" id="391112"/>
<dbReference type="KEGG" id="hsa:391112"/>
<dbReference type="MANE-Select" id="ENST00000641622.1">
    <property type="protein sequence ID" value="ENSP00000492894.1"/>
    <property type="RefSeq nucleotide sequence ID" value="NM_001005189.2"/>
    <property type="RefSeq protein sequence ID" value="NP_001005189.1"/>
</dbReference>
<dbReference type="UCSC" id="uc010pil.2">
    <property type="organism name" value="human"/>
</dbReference>
<dbReference type="AGR" id="HGNC:14823"/>
<dbReference type="CTD" id="391112"/>
<dbReference type="DisGeNET" id="391112"/>
<dbReference type="GeneCards" id="OR6Y1"/>
<dbReference type="HGNC" id="HGNC:14823">
    <property type="gene designation" value="OR6Y1"/>
</dbReference>
<dbReference type="HPA" id="ENSG00000197532">
    <property type="expression patterns" value="Tissue enhanced (retina)"/>
</dbReference>
<dbReference type="neXtProt" id="NX_Q8NGX8"/>
<dbReference type="OpenTargets" id="ENSG00000197532"/>
<dbReference type="PharmGKB" id="PA32610"/>
<dbReference type="VEuPathDB" id="HostDB:ENSG00000197532"/>
<dbReference type="eggNOG" id="ENOG502RIR8">
    <property type="taxonomic scope" value="Eukaryota"/>
</dbReference>
<dbReference type="GeneTree" id="ENSGT01120000271873"/>
<dbReference type="HOGENOM" id="CLU_012526_0_0_1"/>
<dbReference type="InParanoid" id="Q8NGX8"/>
<dbReference type="OMA" id="HYCGTPH"/>
<dbReference type="OrthoDB" id="9447100at2759"/>
<dbReference type="PAN-GO" id="Q8NGX8">
    <property type="GO annotations" value="0 GO annotations based on evolutionary models"/>
</dbReference>
<dbReference type="PhylomeDB" id="Q8NGX8"/>
<dbReference type="TreeFam" id="TF337475"/>
<dbReference type="PathwayCommons" id="Q8NGX8"/>
<dbReference type="Reactome" id="R-HSA-9752946">
    <property type="pathway name" value="Expression and translocation of olfactory receptors"/>
</dbReference>
<dbReference type="BioGRID-ORCS" id="391112">
    <property type="hits" value="8 hits in 746 CRISPR screens"/>
</dbReference>
<dbReference type="GeneWiki" id="OR6Y1"/>
<dbReference type="GenomeRNAi" id="391112"/>
<dbReference type="Pharos" id="Q8NGX8">
    <property type="development level" value="Tdark"/>
</dbReference>
<dbReference type="PRO" id="PR:Q8NGX8"/>
<dbReference type="Proteomes" id="UP000005640">
    <property type="component" value="Chromosome 1"/>
</dbReference>
<dbReference type="RNAct" id="Q8NGX8">
    <property type="molecule type" value="protein"/>
</dbReference>
<dbReference type="GO" id="GO:0005886">
    <property type="term" value="C:plasma membrane"/>
    <property type="evidence" value="ECO:0000318"/>
    <property type="project" value="GO_Central"/>
</dbReference>
<dbReference type="GO" id="GO:0004930">
    <property type="term" value="F:G protein-coupled receptor activity"/>
    <property type="evidence" value="ECO:0007669"/>
    <property type="project" value="UniProtKB-KW"/>
</dbReference>
<dbReference type="GO" id="GO:0004984">
    <property type="term" value="F:olfactory receptor activity"/>
    <property type="evidence" value="ECO:0000318"/>
    <property type="project" value="GO_Central"/>
</dbReference>
<dbReference type="GO" id="GO:0050911">
    <property type="term" value="P:detection of chemical stimulus involved in sensory perception of smell"/>
    <property type="evidence" value="ECO:0000318"/>
    <property type="project" value="GO_Central"/>
</dbReference>
<dbReference type="CDD" id="cd15224">
    <property type="entry name" value="7tmA_OR6B-like"/>
    <property type="match status" value="1"/>
</dbReference>
<dbReference type="FunFam" id="1.20.1070.10:FF:000001">
    <property type="entry name" value="Olfactory receptor"/>
    <property type="match status" value="1"/>
</dbReference>
<dbReference type="Gene3D" id="1.20.1070.10">
    <property type="entry name" value="Rhodopsin 7-helix transmembrane proteins"/>
    <property type="match status" value="1"/>
</dbReference>
<dbReference type="InterPro" id="IPR000276">
    <property type="entry name" value="GPCR_Rhodpsn"/>
</dbReference>
<dbReference type="InterPro" id="IPR017452">
    <property type="entry name" value="GPCR_Rhodpsn_7TM"/>
</dbReference>
<dbReference type="InterPro" id="IPR000725">
    <property type="entry name" value="Olfact_rcpt"/>
</dbReference>
<dbReference type="PANTHER" id="PTHR26453">
    <property type="entry name" value="OLFACTORY RECEPTOR"/>
    <property type="match status" value="1"/>
</dbReference>
<dbReference type="Pfam" id="PF13853">
    <property type="entry name" value="7tm_4"/>
    <property type="match status" value="1"/>
</dbReference>
<dbReference type="PRINTS" id="PR00237">
    <property type="entry name" value="GPCRRHODOPSN"/>
</dbReference>
<dbReference type="PRINTS" id="PR00245">
    <property type="entry name" value="OLFACTORYR"/>
</dbReference>
<dbReference type="SUPFAM" id="SSF81321">
    <property type="entry name" value="Family A G protein-coupled receptor-like"/>
    <property type="match status" value="1"/>
</dbReference>
<dbReference type="PROSITE" id="PS00237">
    <property type="entry name" value="G_PROTEIN_RECEP_F1_1"/>
    <property type="match status" value="1"/>
</dbReference>
<dbReference type="PROSITE" id="PS50262">
    <property type="entry name" value="G_PROTEIN_RECEP_F1_2"/>
    <property type="match status" value="1"/>
</dbReference>
<protein>
    <recommendedName>
        <fullName>Olfactory receptor 6Y1</fullName>
    </recommendedName>
    <alternativeName>
        <fullName>Olfactory receptor 6Y2</fullName>
    </alternativeName>
    <alternativeName>
        <fullName>Olfactory receptor OR1-11</fullName>
    </alternativeName>
</protein>
<comment type="function">
    <text evidence="3">Odorant receptor.</text>
</comment>
<comment type="subcellular location">
    <subcellularLocation>
        <location>Cell membrane</location>
        <topology>Multi-pass membrane protein</topology>
    </subcellularLocation>
</comment>
<comment type="similarity">
    <text evidence="2">Belongs to the G-protein coupled receptor 1 family.</text>
</comment>
<comment type="online information" name="Human Olfactory Receptor Data Exploratorium (HORDE)">
    <link uri="http://genome.weizmann.ac.il/horde/card/index/symbol:OR6Y1"/>
</comment>
<name>OR6Y1_HUMAN</name>
<sequence length="325" mass="36636">MTTIILEVDNHTVTTRFILLGFPTRPAFQLLFFSIFLATYLLTLLENLLIILAIHSDGQLHKPMYFFLSHLSFLEMWYVTVISPKMLVDFLSHDKSISFNGCMTQLYFFVTFVCTEYILLAIMAFDRYVAICNPLRYPVIMTNQLCGTLAGGCWFCGLMTAMIKMVFIAQLHYCGMPQINHYFCDISPLLNVSCEDASQAEMVDFFLALMVIAIPLCVVVASYAAILATILRIPSAQGRQKAFSTCASHLTVVILFYSMTLFTYARPKLMYAYNSNKVVSVLYTVIVPLLNPIIYCLRNHEVKAALRKTIHCRGSGPQGNGAFSS</sequence>
<accession>Q8NGX8</accession>
<accession>Q6IFS0</accession>
<gene>
    <name type="primary">OR6Y1</name>
    <name type="synonym">OR6Y2</name>
</gene>
<keyword id="KW-1003">Cell membrane</keyword>
<keyword id="KW-1015">Disulfide bond</keyword>
<keyword id="KW-0297">G-protein coupled receptor</keyword>
<keyword id="KW-0325">Glycoprotein</keyword>
<keyword id="KW-0472">Membrane</keyword>
<keyword id="KW-0552">Olfaction</keyword>
<keyword id="KW-0675">Receptor</keyword>
<keyword id="KW-1185">Reference proteome</keyword>
<keyword id="KW-0716">Sensory transduction</keyword>
<keyword id="KW-0807">Transducer</keyword>
<keyword id="KW-0812">Transmembrane</keyword>
<keyword id="KW-1133">Transmembrane helix</keyword>
<organism>
    <name type="scientific">Homo sapiens</name>
    <name type="common">Human</name>
    <dbReference type="NCBI Taxonomy" id="9606"/>
    <lineage>
        <taxon>Eukaryota</taxon>
        <taxon>Metazoa</taxon>
        <taxon>Chordata</taxon>
        <taxon>Craniata</taxon>
        <taxon>Vertebrata</taxon>
        <taxon>Euteleostomi</taxon>
        <taxon>Mammalia</taxon>
        <taxon>Eutheria</taxon>
        <taxon>Euarchontoglires</taxon>
        <taxon>Primates</taxon>
        <taxon>Haplorrhini</taxon>
        <taxon>Catarrhini</taxon>
        <taxon>Hominidae</taxon>
        <taxon>Homo</taxon>
    </lineage>
</organism>
<evidence type="ECO:0000255" key="1"/>
<evidence type="ECO:0000255" key="2">
    <source>
        <dbReference type="PROSITE-ProRule" id="PRU00521"/>
    </source>
</evidence>
<evidence type="ECO:0000305" key="3"/>